<dbReference type="EC" id="2.1.2.9" evidence="1"/>
<dbReference type="EMBL" id="CP000360">
    <property type="protein sequence ID" value="ABF43228.1"/>
    <property type="molecule type" value="Genomic_DNA"/>
</dbReference>
<dbReference type="RefSeq" id="WP_011525027.1">
    <property type="nucleotide sequence ID" value="NC_008009.1"/>
</dbReference>
<dbReference type="SMR" id="Q1IIS2"/>
<dbReference type="STRING" id="204669.Acid345_4228"/>
<dbReference type="EnsemblBacteria" id="ABF43228">
    <property type="protein sequence ID" value="ABF43228"/>
    <property type="gene ID" value="Acid345_4228"/>
</dbReference>
<dbReference type="KEGG" id="aba:Acid345_4228"/>
<dbReference type="eggNOG" id="COG0223">
    <property type="taxonomic scope" value="Bacteria"/>
</dbReference>
<dbReference type="HOGENOM" id="CLU_033347_1_1_0"/>
<dbReference type="OrthoDB" id="9802815at2"/>
<dbReference type="Proteomes" id="UP000002432">
    <property type="component" value="Chromosome"/>
</dbReference>
<dbReference type="GO" id="GO:0005829">
    <property type="term" value="C:cytosol"/>
    <property type="evidence" value="ECO:0007669"/>
    <property type="project" value="TreeGrafter"/>
</dbReference>
<dbReference type="GO" id="GO:0004479">
    <property type="term" value="F:methionyl-tRNA formyltransferase activity"/>
    <property type="evidence" value="ECO:0007669"/>
    <property type="project" value="UniProtKB-UniRule"/>
</dbReference>
<dbReference type="CDD" id="cd08646">
    <property type="entry name" value="FMT_core_Met-tRNA-FMT_N"/>
    <property type="match status" value="1"/>
</dbReference>
<dbReference type="CDD" id="cd08704">
    <property type="entry name" value="Met_tRNA_FMT_C"/>
    <property type="match status" value="1"/>
</dbReference>
<dbReference type="FunFam" id="3.40.50.12230:FF:000001">
    <property type="entry name" value="Methionyl-tRNA formyltransferase"/>
    <property type="match status" value="1"/>
</dbReference>
<dbReference type="Gene3D" id="3.40.50.12230">
    <property type="match status" value="1"/>
</dbReference>
<dbReference type="HAMAP" id="MF_00182">
    <property type="entry name" value="Formyl_trans"/>
    <property type="match status" value="1"/>
</dbReference>
<dbReference type="InterPro" id="IPR005794">
    <property type="entry name" value="Fmt"/>
</dbReference>
<dbReference type="InterPro" id="IPR005793">
    <property type="entry name" value="Formyl_trans_C"/>
</dbReference>
<dbReference type="InterPro" id="IPR002376">
    <property type="entry name" value="Formyl_transf_N"/>
</dbReference>
<dbReference type="InterPro" id="IPR036477">
    <property type="entry name" value="Formyl_transf_N_sf"/>
</dbReference>
<dbReference type="InterPro" id="IPR011034">
    <property type="entry name" value="Formyl_transferase-like_C_sf"/>
</dbReference>
<dbReference type="InterPro" id="IPR044135">
    <property type="entry name" value="Met-tRNA-FMT_C"/>
</dbReference>
<dbReference type="InterPro" id="IPR041711">
    <property type="entry name" value="Met-tRNA-FMT_N"/>
</dbReference>
<dbReference type="NCBIfam" id="TIGR00460">
    <property type="entry name" value="fmt"/>
    <property type="match status" value="1"/>
</dbReference>
<dbReference type="PANTHER" id="PTHR11138">
    <property type="entry name" value="METHIONYL-TRNA FORMYLTRANSFERASE"/>
    <property type="match status" value="1"/>
</dbReference>
<dbReference type="PANTHER" id="PTHR11138:SF5">
    <property type="entry name" value="METHIONYL-TRNA FORMYLTRANSFERASE, MITOCHONDRIAL"/>
    <property type="match status" value="1"/>
</dbReference>
<dbReference type="Pfam" id="PF02911">
    <property type="entry name" value="Formyl_trans_C"/>
    <property type="match status" value="1"/>
</dbReference>
<dbReference type="Pfam" id="PF00551">
    <property type="entry name" value="Formyl_trans_N"/>
    <property type="match status" value="1"/>
</dbReference>
<dbReference type="SUPFAM" id="SSF50486">
    <property type="entry name" value="FMT C-terminal domain-like"/>
    <property type="match status" value="1"/>
</dbReference>
<dbReference type="SUPFAM" id="SSF53328">
    <property type="entry name" value="Formyltransferase"/>
    <property type="match status" value="1"/>
</dbReference>
<gene>
    <name evidence="1" type="primary">fmt</name>
    <name type="ordered locus">Acid345_4228</name>
</gene>
<feature type="chain" id="PRO_1000077285" description="Methionyl-tRNA formyltransferase">
    <location>
        <begin position="1"/>
        <end position="312"/>
    </location>
</feature>
<feature type="binding site" evidence="1">
    <location>
        <begin position="110"/>
        <end position="113"/>
    </location>
    <ligand>
        <name>(6S)-5,6,7,8-tetrahydrofolate</name>
        <dbReference type="ChEBI" id="CHEBI:57453"/>
    </ligand>
</feature>
<organism>
    <name type="scientific">Koribacter versatilis (strain Ellin345)</name>
    <dbReference type="NCBI Taxonomy" id="204669"/>
    <lineage>
        <taxon>Bacteria</taxon>
        <taxon>Pseudomonadati</taxon>
        <taxon>Acidobacteriota</taxon>
        <taxon>Terriglobia</taxon>
        <taxon>Terriglobales</taxon>
        <taxon>Candidatus Korobacteraceae</taxon>
        <taxon>Candidatus Korobacter</taxon>
    </lineage>
</organism>
<reference key="1">
    <citation type="journal article" date="2009" name="Appl. Environ. Microbiol.">
        <title>Three genomes from the phylum Acidobacteria provide insight into the lifestyles of these microorganisms in soils.</title>
        <authorList>
            <person name="Ward N.L."/>
            <person name="Challacombe J.F."/>
            <person name="Janssen P.H."/>
            <person name="Henrissat B."/>
            <person name="Coutinho P.M."/>
            <person name="Wu M."/>
            <person name="Xie G."/>
            <person name="Haft D.H."/>
            <person name="Sait M."/>
            <person name="Badger J."/>
            <person name="Barabote R.D."/>
            <person name="Bradley B."/>
            <person name="Brettin T.S."/>
            <person name="Brinkac L.M."/>
            <person name="Bruce D."/>
            <person name="Creasy T."/>
            <person name="Daugherty S.C."/>
            <person name="Davidsen T.M."/>
            <person name="DeBoy R.T."/>
            <person name="Detter J.C."/>
            <person name="Dodson R.J."/>
            <person name="Durkin A.S."/>
            <person name="Ganapathy A."/>
            <person name="Gwinn-Giglio M."/>
            <person name="Han C.S."/>
            <person name="Khouri H."/>
            <person name="Kiss H."/>
            <person name="Kothari S.P."/>
            <person name="Madupu R."/>
            <person name="Nelson K.E."/>
            <person name="Nelson W.C."/>
            <person name="Paulsen I."/>
            <person name="Penn K."/>
            <person name="Ren Q."/>
            <person name="Rosovitz M.J."/>
            <person name="Selengut J.D."/>
            <person name="Shrivastava S."/>
            <person name="Sullivan S.A."/>
            <person name="Tapia R."/>
            <person name="Thompson L.S."/>
            <person name="Watkins K.L."/>
            <person name="Yang Q."/>
            <person name="Yu C."/>
            <person name="Zafar N."/>
            <person name="Zhou L."/>
            <person name="Kuske C.R."/>
        </authorList>
    </citation>
    <scope>NUCLEOTIDE SEQUENCE [LARGE SCALE GENOMIC DNA]</scope>
    <source>
        <strain>Ellin345</strain>
    </source>
</reference>
<evidence type="ECO:0000255" key="1">
    <source>
        <dbReference type="HAMAP-Rule" id="MF_00182"/>
    </source>
</evidence>
<proteinExistence type="inferred from homology"/>
<sequence>MILVFCGTPRFAVPSLEHIVRAGHDVRLVVTQPDRPKGRGMGLAFSPVKDAALALNLPVTQPEKIKNNEEFRAQLSAIAPDAIIVVGYGRIIPQWMIDLPPLGNINVHASLLPKYRGAAPIQWAIAMGEAVTGVTTMKIDAGLDTGDMLLQAEMPIAPEDTSESLAPRLAELGAELLVETLARLEGGVIAAVPQNHAEHTLAPILKKEDGQIDFHRSAQEILNRLRGFTPWPGAFTQFRGKGFFIHQARAVAATLEPGELRIEGENLLVGAGHNTALELLEIQLEGKKRMPARDFINGYRPNSADKLGRLSS</sequence>
<protein>
    <recommendedName>
        <fullName evidence="1">Methionyl-tRNA formyltransferase</fullName>
        <ecNumber evidence="1">2.1.2.9</ecNumber>
    </recommendedName>
</protein>
<keyword id="KW-0648">Protein biosynthesis</keyword>
<keyword id="KW-1185">Reference proteome</keyword>
<keyword id="KW-0808">Transferase</keyword>
<name>FMT_KORVE</name>
<comment type="function">
    <text evidence="1">Attaches a formyl group to the free amino group of methionyl-tRNA(fMet). The formyl group appears to play a dual role in the initiator identity of N-formylmethionyl-tRNA by promoting its recognition by IF2 and preventing the misappropriation of this tRNA by the elongation apparatus.</text>
</comment>
<comment type="catalytic activity">
    <reaction evidence="1">
        <text>L-methionyl-tRNA(fMet) + (6R)-10-formyltetrahydrofolate = N-formyl-L-methionyl-tRNA(fMet) + (6S)-5,6,7,8-tetrahydrofolate + H(+)</text>
        <dbReference type="Rhea" id="RHEA:24380"/>
        <dbReference type="Rhea" id="RHEA-COMP:9952"/>
        <dbReference type="Rhea" id="RHEA-COMP:9953"/>
        <dbReference type="ChEBI" id="CHEBI:15378"/>
        <dbReference type="ChEBI" id="CHEBI:57453"/>
        <dbReference type="ChEBI" id="CHEBI:78530"/>
        <dbReference type="ChEBI" id="CHEBI:78844"/>
        <dbReference type="ChEBI" id="CHEBI:195366"/>
        <dbReference type="EC" id="2.1.2.9"/>
    </reaction>
</comment>
<comment type="similarity">
    <text evidence="1">Belongs to the Fmt family.</text>
</comment>
<accession>Q1IIS2</accession>